<feature type="chain" id="PRO_0000301375" description="Phosphoglucosamine mutase">
    <location>
        <begin position="1"/>
        <end position="444"/>
    </location>
</feature>
<feature type="active site" description="Phosphoserine intermediate" evidence="1">
    <location>
        <position position="102"/>
    </location>
</feature>
<feature type="binding site" description="via phosphate group" evidence="1">
    <location>
        <position position="102"/>
    </location>
    <ligand>
        <name>Mg(2+)</name>
        <dbReference type="ChEBI" id="CHEBI:18420"/>
    </ligand>
</feature>
<feature type="binding site" evidence="1">
    <location>
        <position position="239"/>
    </location>
    <ligand>
        <name>Mg(2+)</name>
        <dbReference type="ChEBI" id="CHEBI:18420"/>
    </ligand>
</feature>
<feature type="binding site" evidence="1">
    <location>
        <position position="241"/>
    </location>
    <ligand>
        <name>Mg(2+)</name>
        <dbReference type="ChEBI" id="CHEBI:18420"/>
    </ligand>
</feature>
<feature type="binding site" evidence="1">
    <location>
        <position position="243"/>
    </location>
    <ligand>
        <name>Mg(2+)</name>
        <dbReference type="ChEBI" id="CHEBI:18420"/>
    </ligand>
</feature>
<feature type="modified residue" description="Phosphoserine" evidence="1">
    <location>
        <position position="102"/>
    </location>
</feature>
<reference key="1">
    <citation type="journal article" date="2007" name="Nat. Biotechnol.">
        <title>Complete genome sequence of the erythromycin-producing bacterium Saccharopolyspora erythraea NRRL23338.</title>
        <authorList>
            <person name="Oliynyk M."/>
            <person name="Samborskyy M."/>
            <person name="Lester J.B."/>
            <person name="Mironenko T."/>
            <person name="Scott N."/>
            <person name="Dickens S."/>
            <person name="Haydock S.F."/>
            <person name="Leadlay P.F."/>
        </authorList>
    </citation>
    <scope>NUCLEOTIDE SEQUENCE [LARGE SCALE GENOMIC DNA]</scope>
    <source>
        <strain>ATCC 11635 / DSM 40517 / JCM 4748 / NBRC 13426 / NCIMB 8594 / NRRL 2338</strain>
    </source>
</reference>
<evidence type="ECO:0000255" key="1">
    <source>
        <dbReference type="HAMAP-Rule" id="MF_01554"/>
    </source>
</evidence>
<comment type="function">
    <text evidence="1">Catalyzes the conversion of glucosamine-6-phosphate to glucosamine-1-phosphate.</text>
</comment>
<comment type="catalytic activity">
    <reaction evidence="1">
        <text>alpha-D-glucosamine 1-phosphate = D-glucosamine 6-phosphate</text>
        <dbReference type="Rhea" id="RHEA:23424"/>
        <dbReference type="ChEBI" id="CHEBI:58516"/>
        <dbReference type="ChEBI" id="CHEBI:58725"/>
        <dbReference type="EC" id="5.4.2.10"/>
    </reaction>
</comment>
<comment type="cofactor">
    <cofactor evidence="1">
        <name>Mg(2+)</name>
        <dbReference type="ChEBI" id="CHEBI:18420"/>
    </cofactor>
    <text evidence="1">Binds 1 Mg(2+) ion per subunit.</text>
</comment>
<comment type="PTM">
    <text evidence="1">Activated by phosphorylation.</text>
</comment>
<comment type="similarity">
    <text evidence="1">Belongs to the phosphohexose mutase family.</text>
</comment>
<keyword id="KW-0413">Isomerase</keyword>
<keyword id="KW-0460">Magnesium</keyword>
<keyword id="KW-0479">Metal-binding</keyword>
<keyword id="KW-0597">Phosphoprotein</keyword>
<keyword id="KW-1185">Reference proteome</keyword>
<gene>
    <name evidence="1" type="primary">glmM</name>
    <name type="ordered locus">SACE_6779</name>
</gene>
<organism>
    <name type="scientific">Saccharopolyspora erythraea (strain ATCC 11635 / DSM 40517 / JCM 4748 / NBRC 13426 / NCIMB 8594 / NRRL 2338)</name>
    <dbReference type="NCBI Taxonomy" id="405948"/>
    <lineage>
        <taxon>Bacteria</taxon>
        <taxon>Bacillati</taxon>
        <taxon>Actinomycetota</taxon>
        <taxon>Actinomycetes</taxon>
        <taxon>Pseudonocardiales</taxon>
        <taxon>Pseudonocardiaceae</taxon>
        <taxon>Saccharopolyspora</taxon>
    </lineage>
</organism>
<protein>
    <recommendedName>
        <fullName evidence="1">Phosphoglucosamine mutase</fullName>
        <ecNumber evidence="1">5.4.2.10</ecNumber>
    </recommendedName>
</protein>
<name>GLMM_SACEN</name>
<dbReference type="EC" id="5.4.2.10" evidence="1"/>
<dbReference type="EMBL" id="AM420293">
    <property type="protein sequence ID" value="CAM05944.1"/>
    <property type="molecule type" value="Genomic_DNA"/>
</dbReference>
<dbReference type="RefSeq" id="WP_009943274.1">
    <property type="nucleotide sequence ID" value="NC_009142.1"/>
</dbReference>
<dbReference type="SMR" id="A4FPG9"/>
<dbReference type="STRING" id="405948.SACE_6779"/>
<dbReference type="KEGG" id="sen:SACE_6779"/>
<dbReference type="eggNOG" id="COG1109">
    <property type="taxonomic scope" value="Bacteria"/>
</dbReference>
<dbReference type="HOGENOM" id="CLU_016950_7_0_11"/>
<dbReference type="OrthoDB" id="9803322at2"/>
<dbReference type="Proteomes" id="UP000006728">
    <property type="component" value="Chromosome"/>
</dbReference>
<dbReference type="GO" id="GO:0005829">
    <property type="term" value="C:cytosol"/>
    <property type="evidence" value="ECO:0007669"/>
    <property type="project" value="TreeGrafter"/>
</dbReference>
<dbReference type="GO" id="GO:0000287">
    <property type="term" value="F:magnesium ion binding"/>
    <property type="evidence" value="ECO:0007669"/>
    <property type="project" value="UniProtKB-UniRule"/>
</dbReference>
<dbReference type="GO" id="GO:0008966">
    <property type="term" value="F:phosphoglucosamine mutase activity"/>
    <property type="evidence" value="ECO:0007669"/>
    <property type="project" value="UniProtKB-UniRule"/>
</dbReference>
<dbReference type="GO" id="GO:0004615">
    <property type="term" value="F:phosphomannomutase activity"/>
    <property type="evidence" value="ECO:0007669"/>
    <property type="project" value="TreeGrafter"/>
</dbReference>
<dbReference type="GO" id="GO:0005975">
    <property type="term" value="P:carbohydrate metabolic process"/>
    <property type="evidence" value="ECO:0007669"/>
    <property type="project" value="InterPro"/>
</dbReference>
<dbReference type="GO" id="GO:0009252">
    <property type="term" value="P:peptidoglycan biosynthetic process"/>
    <property type="evidence" value="ECO:0007669"/>
    <property type="project" value="TreeGrafter"/>
</dbReference>
<dbReference type="GO" id="GO:0006048">
    <property type="term" value="P:UDP-N-acetylglucosamine biosynthetic process"/>
    <property type="evidence" value="ECO:0007669"/>
    <property type="project" value="TreeGrafter"/>
</dbReference>
<dbReference type="CDD" id="cd05802">
    <property type="entry name" value="GlmM"/>
    <property type="match status" value="1"/>
</dbReference>
<dbReference type="FunFam" id="3.30.310.50:FF:000001">
    <property type="entry name" value="Phosphoglucosamine mutase"/>
    <property type="match status" value="1"/>
</dbReference>
<dbReference type="FunFam" id="3.40.120.10:FF:000001">
    <property type="entry name" value="Phosphoglucosamine mutase"/>
    <property type="match status" value="1"/>
</dbReference>
<dbReference type="FunFam" id="3.40.120.10:FF:000002">
    <property type="entry name" value="Phosphoglucosamine mutase"/>
    <property type="match status" value="1"/>
</dbReference>
<dbReference type="Gene3D" id="3.40.120.10">
    <property type="entry name" value="Alpha-D-Glucose-1,6-Bisphosphate, subunit A, domain 3"/>
    <property type="match status" value="3"/>
</dbReference>
<dbReference type="Gene3D" id="3.30.310.50">
    <property type="entry name" value="Alpha-D-phosphohexomutase, C-terminal domain"/>
    <property type="match status" value="1"/>
</dbReference>
<dbReference type="HAMAP" id="MF_01554_B">
    <property type="entry name" value="GlmM_B"/>
    <property type="match status" value="1"/>
</dbReference>
<dbReference type="InterPro" id="IPR005844">
    <property type="entry name" value="A-D-PHexomutase_a/b/a-I"/>
</dbReference>
<dbReference type="InterPro" id="IPR016055">
    <property type="entry name" value="A-D-PHexomutase_a/b/a-I/II/III"/>
</dbReference>
<dbReference type="InterPro" id="IPR005845">
    <property type="entry name" value="A-D-PHexomutase_a/b/a-II"/>
</dbReference>
<dbReference type="InterPro" id="IPR005846">
    <property type="entry name" value="A-D-PHexomutase_a/b/a-III"/>
</dbReference>
<dbReference type="InterPro" id="IPR005843">
    <property type="entry name" value="A-D-PHexomutase_C"/>
</dbReference>
<dbReference type="InterPro" id="IPR036900">
    <property type="entry name" value="A-D-PHexomutase_C_sf"/>
</dbReference>
<dbReference type="InterPro" id="IPR016066">
    <property type="entry name" value="A-D-PHexomutase_CS"/>
</dbReference>
<dbReference type="InterPro" id="IPR005841">
    <property type="entry name" value="Alpha-D-phosphohexomutase_SF"/>
</dbReference>
<dbReference type="InterPro" id="IPR006352">
    <property type="entry name" value="GlmM_bact"/>
</dbReference>
<dbReference type="InterPro" id="IPR050060">
    <property type="entry name" value="Phosphoglucosamine_mutase"/>
</dbReference>
<dbReference type="NCBIfam" id="TIGR01455">
    <property type="entry name" value="glmM"/>
    <property type="match status" value="1"/>
</dbReference>
<dbReference type="NCBIfam" id="NF008139">
    <property type="entry name" value="PRK10887.1"/>
    <property type="match status" value="1"/>
</dbReference>
<dbReference type="PANTHER" id="PTHR42946:SF1">
    <property type="entry name" value="PHOSPHOGLUCOMUTASE (ALPHA-D-GLUCOSE-1,6-BISPHOSPHATE-DEPENDENT)"/>
    <property type="match status" value="1"/>
</dbReference>
<dbReference type="PANTHER" id="PTHR42946">
    <property type="entry name" value="PHOSPHOHEXOSE MUTASE"/>
    <property type="match status" value="1"/>
</dbReference>
<dbReference type="Pfam" id="PF02878">
    <property type="entry name" value="PGM_PMM_I"/>
    <property type="match status" value="1"/>
</dbReference>
<dbReference type="Pfam" id="PF02879">
    <property type="entry name" value="PGM_PMM_II"/>
    <property type="match status" value="1"/>
</dbReference>
<dbReference type="Pfam" id="PF02880">
    <property type="entry name" value="PGM_PMM_III"/>
    <property type="match status" value="1"/>
</dbReference>
<dbReference type="Pfam" id="PF00408">
    <property type="entry name" value="PGM_PMM_IV"/>
    <property type="match status" value="1"/>
</dbReference>
<dbReference type="PRINTS" id="PR00509">
    <property type="entry name" value="PGMPMM"/>
</dbReference>
<dbReference type="SUPFAM" id="SSF55957">
    <property type="entry name" value="Phosphoglucomutase, C-terminal domain"/>
    <property type="match status" value="1"/>
</dbReference>
<dbReference type="SUPFAM" id="SSF53738">
    <property type="entry name" value="Phosphoglucomutase, first 3 domains"/>
    <property type="match status" value="3"/>
</dbReference>
<dbReference type="PROSITE" id="PS00710">
    <property type="entry name" value="PGM_PMM"/>
    <property type="match status" value="1"/>
</dbReference>
<proteinExistence type="inferred from homology"/>
<accession>A4FPG9</accession>
<sequence>MSRLFGTDGVRGLANADLTPELALSVASAAARVLYERDDSRRRVALVGRDPRASGEMLEAAVTAGLTSAGADVLRVGVLPTPAVAHLVSAMRADLGVMISASHNPMPDNGIKLFAAGGHKLPDAVEDEIADRLDERVDRPTGAAVGRARDVPDAGSRYVDHLLEATPQPLDGLRVVVDCANGAAAAVAPSAYRLAGAEVIALNAEPDGLNINEGVGSTHLDGLRAAVREHRADLGLAHDGDADRCLAVDATGSVVDGDQIMAILAVAMKEAGELADDTLVTTVMSNLGLHLAMREHGVKLRTTAVGDRYVLAELREGGFSLGGEQSGHVVLPDHATTGDGLLTALRLMGRVVETGRSLAELAATMTRLPQVLVNVRVADKATACGAPEVAKAVAEAEAELGDEGRVLLRPSGTEQLVRVMVEARSEGTAQRVAGRLAELVAAIR</sequence>